<proteinExistence type="evidence at protein level"/>
<protein>
    <recommendedName>
        <fullName>Ras-related protein Rab-19</fullName>
        <ecNumber evidence="3">3.6.5.2</ecNumber>
    </recommendedName>
</protein>
<feature type="chain" id="PRO_0000121201" description="Ras-related protein Rab-19">
    <location>
        <begin position="1"/>
        <end position="217"/>
    </location>
</feature>
<feature type="short sequence motif" description="Switch 1" evidence="3">
    <location>
        <begin position="39"/>
        <end position="54"/>
    </location>
</feature>
<feature type="short sequence motif" description="Switch 2" evidence="3">
    <location>
        <begin position="74"/>
        <end position="89"/>
    </location>
</feature>
<feature type="binding site" evidence="3">
    <location>
        <position position="26"/>
    </location>
    <ligand>
        <name>GTP</name>
        <dbReference type="ChEBI" id="CHEBI:37565"/>
    </ligand>
</feature>
<feature type="binding site" evidence="3">
    <location>
        <position position="28"/>
    </location>
    <ligand>
        <name>GTP</name>
        <dbReference type="ChEBI" id="CHEBI:37565"/>
    </ligand>
</feature>
<feature type="binding site" evidence="3">
    <location>
        <position position="29"/>
    </location>
    <ligand>
        <name>GTP</name>
        <dbReference type="ChEBI" id="CHEBI:37565"/>
    </ligand>
</feature>
<feature type="binding site" evidence="3">
    <location>
        <position position="30"/>
    </location>
    <ligand>
        <name>GTP</name>
        <dbReference type="ChEBI" id="CHEBI:37565"/>
    </ligand>
</feature>
<feature type="binding site" evidence="3">
    <location>
        <position position="31"/>
    </location>
    <ligand>
        <name>GTP</name>
        <dbReference type="ChEBI" id="CHEBI:37565"/>
    </ligand>
</feature>
<feature type="binding site" evidence="3">
    <location>
        <position position="31"/>
    </location>
    <ligand>
        <name>Mg(2+)</name>
        <dbReference type="ChEBI" id="CHEBI:18420"/>
    </ligand>
</feature>
<feature type="binding site" evidence="3">
    <location>
        <position position="32"/>
    </location>
    <ligand>
        <name>GTP</name>
        <dbReference type="ChEBI" id="CHEBI:37565"/>
    </ligand>
</feature>
<feature type="binding site" evidence="3">
    <location>
        <position position="42"/>
    </location>
    <ligand>
        <name>GTP</name>
        <dbReference type="ChEBI" id="CHEBI:37565"/>
    </ligand>
</feature>
<feature type="binding site" evidence="3">
    <location>
        <position position="43"/>
    </location>
    <ligand>
        <name>GTP</name>
        <dbReference type="ChEBI" id="CHEBI:37565"/>
    </ligand>
</feature>
<feature type="binding site" evidence="3">
    <location>
        <position position="44"/>
    </location>
    <ligand>
        <name>GTP</name>
        <dbReference type="ChEBI" id="CHEBI:37565"/>
    </ligand>
</feature>
<feature type="binding site" evidence="3">
    <location>
        <position position="45"/>
    </location>
    <ligand>
        <name>GTP</name>
        <dbReference type="ChEBI" id="CHEBI:37565"/>
    </ligand>
</feature>
<feature type="binding site" evidence="3">
    <location>
        <position position="49"/>
    </location>
    <ligand>
        <name>GTP</name>
        <dbReference type="ChEBI" id="CHEBI:37565"/>
    </ligand>
</feature>
<feature type="binding site" evidence="3">
    <location>
        <position position="49"/>
    </location>
    <ligand>
        <name>Mg(2+)</name>
        <dbReference type="ChEBI" id="CHEBI:18420"/>
    </ligand>
</feature>
<feature type="binding site" evidence="3">
    <location>
        <position position="72"/>
    </location>
    <ligand>
        <name>Mg(2+)</name>
        <dbReference type="ChEBI" id="CHEBI:18420"/>
    </ligand>
</feature>
<feature type="binding site" evidence="3">
    <location>
        <position position="75"/>
    </location>
    <ligand>
        <name>GTP</name>
        <dbReference type="ChEBI" id="CHEBI:37565"/>
    </ligand>
</feature>
<feature type="binding site" evidence="3">
    <location>
        <position position="130"/>
    </location>
    <ligand>
        <name>GTP</name>
        <dbReference type="ChEBI" id="CHEBI:37565"/>
    </ligand>
</feature>
<feature type="binding site" evidence="3">
    <location>
        <position position="131"/>
    </location>
    <ligand>
        <name>GTP</name>
        <dbReference type="ChEBI" id="CHEBI:37565"/>
    </ligand>
</feature>
<feature type="binding site" evidence="3">
    <location>
        <position position="133"/>
    </location>
    <ligand>
        <name>GTP</name>
        <dbReference type="ChEBI" id="CHEBI:37565"/>
    </ligand>
</feature>
<feature type="binding site" evidence="3">
    <location>
        <position position="161"/>
    </location>
    <ligand>
        <name>GTP</name>
        <dbReference type="ChEBI" id="CHEBI:37565"/>
    </ligand>
</feature>
<feature type="binding site" evidence="3">
    <location>
        <position position="162"/>
    </location>
    <ligand>
        <name>GTP</name>
        <dbReference type="ChEBI" id="CHEBI:37565"/>
    </ligand>
</feature>
<feature type="binding site" evidence="3">
    <location>
        <position position="163"/>
    </location>
    <ligand>
        <name>GTP</name>
        <dbReference type="ChEBI" id="CHEBI:37565"/>
    </ligand>
</feature>
<feature type="modified residue" description="Cysteine methyl ester" evidence="1">
    <location>
        <position position="217"/>
    </location>
</feature>
<feature type="lipid moiety-binding region" description="S-geranylgeranyl cysteine" evidence="1">
    <location>
        <position position="215"/>
    </location>
</feature>
<feature type="lipid moiety-binding region" description="S-geranylgeranyl cysteine" evidence="1">
    <location>
        <position position="217"/>
    </location>
</feature>
<feature type="sequence conflict" description="In Ref. 1; CAA56644." evidence="4" ref="1">
    <original>T</original>
    <variation>R</variation>
    <location>
        <position position="9"/>
    </location>
</feature>
<keyword id="KW-1003">Cell membrane</keyword>
<keyword id="KW-0342">GTP-binding</keyword>
<keyword id="KW-0378">Hydrolase</keyword>
<keyword id="KW-0449">Lipoprotein</keyword>
<keyword id="KW-0460">Magnesium</keyword>
<keyword id="KW-0472">Membrane</keyword>
<keyword id="KW-0479">Metal-binding</keyword>
<keyword id="KW-0488">Methylation</keyword>
<keyword id="KW-0547">Nucleotide-binding</keyword>
<keyword id="KW-0636">Prenylation</keyword>
<keyword id="KW-1185">Reference proteome</keyword>
<reference key="1">
    <citation type="journal article" date="1995" name="Gene">
        <title>Isolation of a murine cDNA clone encoding Rab19, a novel tissue-specific small GTPase.</title>
        <authorList>
            <person name="Luetcke A."/>
            <person name="Olkkonen V.M."/>
            <person name="Dupree P."/>
            <person name="Lutcke H."/>
            <person name="Simons K."/>
            <person name="Zerial M."/>
        </authorList>
    </citation>
    <scope>NUCLEOTIDE SEQUENCE [MRNA]</scope>
    <source>
        <tissue>Kidney</tissue>
    </source>
</reference>
<reference key="2">
    <citation type="journal article" date="2006" name="Genes Cells">
        <title>Screening for target Rabs of TBC (Tre-2/Bub2/Cdc16) domain-containing proteins based on their Rab-binding activity.</title>
        <authorList>
            <person name="Itoh T."/>
            <person name="Satoh M."/>
            <person name="Kanno E."/>
            <person name="Fukuda M."/>
        </authorList>
    </citation>
    <scope>NUCLEOTIDE SEQUENCE [MRNA]</scope>
    <source>
        <strain>BALB/cJ</strain>
    </source>
</reference>
<reference key="3">
    <citation type="journal article" date="2004" name="Genome Res.">
        <title>The status, quality, and expansion of the NIH full-length cDNA project: the Mammalian Gene Collection (MGC).</title>
        <authorList>
            <consortium name="The MGC Project Team"/>
        </authorList>
    </citation>
    <scope>NUCLEOTIDE SEQUENCE [LARGE SCALE MRNA]</scope>
    <source>
        <strain>C57BL/6J</strain>
        <tissue>Thymus</tissue>
    </source>
</reference>
<reference key="4">
    <citation type="journal article" date="1992" name="Gene">
        <title>The complexity of the Rab and Rho GTP-binding protein subfamilies revealed by a PCR cloning approach.</title>
        <authorList>
            <person name="Chavrier P."/>
            <person name="Simons K."/>
            <person name="Zerial M."/>
        </authorList>
    </citation>
    <scope>NUCLEOTIDE SEQUENCE [MRNA] OF 1-77</scope>
    <source>
        <tissue>Kidney</tissue>
    </source>
</reference>
<reference key="5">
    <citation type="journal article" date="2010" name="Cell">
        <title>A tissue-specific atlas of mouse protein phosphorylation and expression.</title>
        <authorList>
            <person name="Huttlin E.L."/>
            <person name="Jedrychowski M.P."/>
            <person name="Elias J.E."/>
            <person name="Goswami T."/>
            <person name="Rad R."/>
            <person name="Beausoleil S.A."/>
            <person name="Villen J."/>
            <person name="Haas W."/>
            <person name="Sowa M.E."/>
            <person name="Gygi S.P."/>
        </authorList>
    </citation>
    <scope>IDENTIFICATION BY MASS SPECTROMETRY [LARGE SCALE ANALYSIS]</scope>
    <source>
        <tissue>Spleen</tissue>
    </source>
</reference>
<organism>
    <name type="scientific">Mus musculus</name>
    <name type="common">Mouse</name>
    <dbReference type="NCBI Taxonomy" id="10090"/>
    <lineage>
        <taxon>Eukaryota</taxon>
        <taxon>Metazoa</taxon>
        <taxon>Chordata</taxon>
        <taxon>Craniata</taxon>
        <taxon>Vertebrata</taxon>
        <taxon>Euteleostomi</taxon>
        <taxon>Mammalia</taxon>
        <taxon>Eutheria</taxon>
        <taxon>Euarchontoglires</taxon>
        <taxon>Glires</taxon>
        <taxon>Rodentia</taxon>
        <taxon>Myomorpha</taxon>
        <taxon>Muroidea</taxon>
        <taxon>Muridae</taxon>
        <taxon>Murinae</taxon>
        <taxon>Mus</taxon>
        <taxon>Mus</taxon>
    </lineage>
</organism>
<name>RAB19_MOUSE</name>
<comment type="function">
    <text evidence="3">The small GTPases Rab are key regulators of intracellular membrane trafficking, from the formation of transport vesicles to their fusion with membranes. Rabs cycle between an inactive GDP-bound form and an active GTP-bound form that is able to recruit to membranes different set of downstream effectors directly responsible for vesicle formation, movement, tethering and fusion.</text>
</comment>
<comment type="catalytic activity">
    <reaction evidence="3">
        <text>GTP + H2O = GDP + phosphate + H(+)</text>
        <dbReference type="Rhea" id="RHEA:19669"/>
        <dbReference type="ChEBI" id="CHEBI:15377"/>
        <dbReference type="ChEBI" id="CHEBI:15378"/>
        <dbReference type="ChEBI" id="CHEBI:37565"/>
        <dbReference type="ChEBI" id="CHEBI:43474"/>
        <dbReference type="ChEBI" id="CHEBI:58189"/>
        <dbReference type="EC" id="3.6.5.2"/>
    </reaction>
    <physiologicalReaction direction="left-to-right" evidence="3">
        <dbReference type="Rhea" id="RHEA:19670"/>
    </physiologicalReaction>
</comment>
<comment type="cofactor">
    <cofactor evidence="3">
        <name>Mg(2+)</name>
        <dbReference type="ChEBI" id="CHEBI:18420"/>
    </cofactor>
</comment>
<comment type="activity regulation">
    <text evidence="2">Regulated by guanine nucleotide exchange factors (GEFs) which promote the exchange of bound GDP for free GTP. Regulated by GTPase activating proteins (GAPs) which increase the GTP hydrolysis activity. Inhibited by GDP dissociation inhibitors (GDIs).</text>
</comment>
<comment type="subcellular location">
    <subcellularLocation>
        <location evidence="4">Cell membrane</location>
        <topology evidence="4">Lipid-anchor</topology>
        <orientation evidence="4">Cytoplasmic side</orientation>
    </subcellularLocation>
</comment>
<comment type="tissue specificity">
    <text>Expressed in a tissue-specific manner. Detected at high levels in intestine, lung and spleen, and at a lower level in kidney.</text>
</comment>
<comment type="domain">
    <text evidence="3">Switch 1, switch 2 and the interswitch regions are characteristic of Rab GTPases and mediate the interactions with Rab downstream effectors. The switch regions undergo conformational changes upon nucleotide binding which drives interaction with specific sets of effector proteins, with most effectors only binding to GTP-bound Rab.</text>
</comment>
<comment type="similarity">
    <text evidence="4">Belongs to the small GTPase superfamily. Rab family.</text>
</comment>
<gene>
    <name evidence="5" type="primary">Rab19</name>
</gene>
<dbReference type="EC" id="3.6.5.2" evidence="3"/>
<dbReference type="EMBL" id="X80473">
    <property type="protein sequence ID" value="CAA56644.1"/>
    <property type="molecule type" value="mRNA"/>
</dbReference>
<dbReference type="EMBL" id="AB232613">
    <property type="protein sequence ID" value="BAF02875.1"/>
    <property type="molecule type" value="mRNA"/>
</dbReference>
<dbReference type="EMBL" id="BC032936">
    <property type="protein sequence ID" value="AAH32936.1"/>
    <property type="molecule type" value="mRNA"/>
</dbReference>
<dbReference type="EMBL" id="M79309">
    <property type="protein sequence ID" value="AAK14833.1"/>
    <property type="molecule type" value="mRNA"/>
</dbReference>
<dbReference type="CCDS" id="CCDS20021.1"/>
<dbReference type="PIR" id="JH0649">
    <property type="entry name" value="JH0649"/>
</dbReference>
<dbReference type="PIR" id="PC4012">
    <property type="entry name" value="PC4012"/>
</dbReference>
<dbReference type="RefSeq" id="NP_035356.1">
    <property type="nucleotide sequence ID" value="NM_011226.2"/>
</dbReference>
<dbReference type="SMR" id="P35294"/>
<dbReference type="DIP" id="DIP-60515N"/>
<dbReference type="FunCoup" id="P35294">
    <property type="interactions" value="560"/>
</dbReference>
<dbReference type="IntAct" id="P35294">
    <property type="interactions" value="24"/>
</dbReference>
<dbReference type="STRING" id="10090.ENSMUSP00000031986"/>
<dbReference type="iPTMnet" id="P35294"/>
<dbReference type="PhosphoSitePlus" id="P35294"/>
<dbReference type="PaxDb" id="10090-ENSMUSP00000031986"/>
<dbReference type="PeptideAtlas" id="P35294"/>
<dbReference type="ProteomicsDB" id="253141"/>
<dbReference type="Antibodypedia" id="32445">
    <property type="antibodies" value="92 antibodies from 21 providers"/>
</dbReference>
<dbReference type="DNASU" id="19331"/>
<dbReference type="Ensembl" id="ENSMUST00000031986.5">
    <property type="protein sequence ID" value="ENSMUSP00000031986.5"/>
    <property type="gene ID" value="ENSMUSG00000029923.5"/>
</dbReference>
<dbReference type="GeneID" id="19331"/>
<dbReference type="KEGG" id="mmu:19331"/>
<dbReference type="UCSC" id="uc009blp.1">
    <property type="organism name" value="mouse"/>
</dbReference>
<dbReference type="AGR" id="MGI:103292"/>
<dbReference type="CTD" id="401409"/>
<dbReference type="MGI" id="MGI:103292">
    <property type="gene designation" value="Rab19"/>
</dbReference>
<dbReference type="VEuPathDB" id="HostDB:ENSMUSG00000029923"/>
<dbReference type="eggNOG" id="KOG0084">
    <property type="taxonomic scope" value="Eukaryota"/>
</dbReference>
<dbReference type="GeneTree" id="ENSGT00940000156717"/>
<dbReference type="HOGENOM" id="CLU_041217_23_1_1"/>
<dbReference type="InParanoid" id="P35294"/>
<dbReference type="OMA" id="DMWEKRH"/>
<dbReference type="OrthoDB" id="9989112at2759"/>
<dbReference type="PhylomeDB" id="P35294"/>
<dbReference type="TreeFam" id="TF300097"/>
<dbReference type="Reactome" id="R-MMU-8873719">
    <property type="pathway name" value="RAB geranylgeranylation"/>
</dbReference>
<dbReference type="BioGRID-ORCS" id="19331">
    <property type="hits" value="2 hits in 75 CRISPR screens"/>
</dbReference>
<dbReference type="PRO" id="PR:P35294"/>
<dbReference type="Proteomes" id="UP000000589">
    <property type="component" value="Chromosome 6"/>
</dbReference>
<dbReference type="RNAct" id="P35294">
    <property type="molecule type" value="protein"/>
</dbReference>
<dbReference type="Bgee" id="ENSMUSG00000029923">
    <property type="expression patterns" value="Expressed in otolith organ and 68 other cell types or tissues"/>
</dbReference>
<dbReference type="GO" id="GO:0005886">
    <property type="term" value="C:plasma membrane"/>
    <property type="evidence" value="ECO:0007669"/>
    <property type="project" value="UniProtKB-SubCell"/>
</dbReference>
<dbReference type="GO" id="GO:0005525">
    <property type="term" value="F:GTP binding"/>
    <property type="evidence" value="ECO:0007669"/>
    <property type="project" value="UniProtKB-KW"/>
</dbReference>
<dbReference type="GO" id="GO:0003924">
    <property type="term" value="F:GTPase activity"/>
    <property type="evidence" value="ECO:0007669"/>
    <property type="project" value="InterPro"/>
</dbReference>
<dbReference type="CDD" id="cd01864">
    <property type="entry name" value="Rab19"/>
    <property type="match status" value="1"/>
</dbReference>
<dbReference type="FunFam" id="3.40.50.300:FF:000887">
    <property type="entry name" value="Ras-related protein Rab-19"/>
    <property type="match status" value="1"/>
</dbReference>
<dbReference type="Gene3D" id="3.40.50.300">
    <property type="entry name" value="P-loop containing nucleotide triphosphate hydrolases"/>
    <property type="match status" value="1"/>
</dbReference>
<dbReference type="InterPro" id="IPR027417">
    <property type="entry name" value="P-loop_NTPase"/>
</dbReference>
<dbReference type="InterPro" id="IPR048040">
    <property type="entry name" value="Rab19/43"/>
</dbReference>
<dbReference type="InterPro" id="IPR050209">
    <property type="entry name" value="Rab_GTPases_membrane_traffic"/>
</dbReference>
<dbReference type="InterPro" id="IPR005225">
    <property type="entry name" value="Small_GTP-bd"/>
</dbReference>
<dbReference type="InterPro" id="IPR001806">
    <property type="entry name" value="Small_GTPase"/>
</dbReference>
<dbReference type="NCBIfam" id="TIGR00231">
    <property type="entry name" value="small_GTP"/>
    <property type="match status" value="1"/>
</dbReference>
<dbReference type="PANTHER" id="PTHR47979">
    <property type="entry name" value="DRAB11-RELATED"/>
    <property type="match status" value="1"/>
</dbReference>
<dbReference type="Pfam" id="PF00071">
    <property type="entry name" value="Ras"/>
    <property type="match status" value="1"/>
</dbReference>
<dbReference type="PRINTS" id="PR00449">
    <property type="entry name" value="RASTRNSFRMNG"/>
</dbReference>
<dbReference type="SMART" id="SM00175">
    <property type="entry name" value="RAB"/>
    <property type="match status" value="1"/>
</dbReference>
<dbReference type="SMART" id="SM00176">
    <property type="entry name" value="RAN"/>
    <property type="match status" value="1"/>
</dbReference>
<dbReference type="SMART" id="SM00173">
    <property type="entry name" value="RAS"/>
    <property type="match status" value="1"/>
</dbReference>
<dbReference type="SMART" id="SM00174">
    <property type="entry name" value="RHO"/>
    <property type="match status" value="1"/>
</dbReference>
<dbReference type="SUPFAM" id="SSF52540">
    <property type="entry name" value="P-loop containing nucleoside triphosphate hydrolases"/>
    <property type="match status" value="1"/>
</dbReference>
<dbReference type="PROSITE" id="PS51419">
    <property type="entry name" value="RAB"/>
    <property type="match status" value="1"/>
</dbReference>
<sequence length="217" mass="24398">MQFSSSSRTSDENVDYLFKVILIGDSNVGKTCVVQHFKSGVYSESQQNTIGVDFTVRSLEIDGKKVKMQVWDTAGQERFRTITQSYYRSAHAAIIAYDLTRRSTFESVPHWIHEIEKYGAANLVIMLIGNKSDLWEKRHVLFEDACTLAEKHGLLAVLETSAKESRNIDEVFVLMAKELIARNSLHLYGESAQQGLSQDSSPVLVAQVPNESTRCTC</sequence>
<accession>P35294</accession>
<accession>O35697</accession>
<accession>Q6GTV2</accession>
<evidence type="ECO:0000250" key="1"/>
<evidence type="ECO:0000250" key="2">
    <source>
        <dbReference type="UniProtKB" id="A4D1S5"/>
    </source>
</evidence>
<evidence type="ECO:0000250" key="3">
    <source>
        <dbReference type="UniProtKB" id="Q9H0U4"/>
    </source>
</evidence>
<evidence type="ECO:0000305" key="4"/>
<evidence type="ECO:0000312" key="5">
    <source>
        <dbReference type="MGI" id="MGI:103292"/>
    </source>
</evidence>